<accession>Q16706</accession>
<accession>Q16767</accession>
<dbReference type="EC" id="3.2.1.114" evidence="2"/>
<dbReference type="EMBL" id="U31520">
    <property type="protein sequence ID" value="AAC50302.1"/>
    <property type="molecule type" value="mRNA"/>
</dbReference>
<dbReference type="EMBL" id="D63998">
    <property type="protein sequence ID" value="BAA10017.1"/>
    <property type="molecule type" value="mRNA"/>
</dbReference>
<dbReference type="CCDS" id="CCDS34209.1"/>
<dbReference type="RefSeq" id="NP_002363.2">
    <property type="nucleotide sequence ID" value="NM_002372.4"/>
</dbReference>
<dbReference type="SMR" id="Q16706"/>
<dbReference type="BioGRID" id="110297">
    <property type="interactions" value="114"/>
</dbReference>
<dbReference type="FunCoup" id="Q16706">
    <property type="interactions" value="1227"/>
</dbReference>
<dbReference type="IntAct" id="Q16706">
    <property type="interactions" value="29"/>
</dbReference>
<dbReference type="MINT" id="Q16706"/>
<dbReference type="STRING" id="9606.ENSP00000261483"/>
<dbReference type="BindingDB" id="Q16706"/>
<dbReference type="ChEMBL" id="CHEMBL4056"/>
<dbReference type="DrugBank" id="DB06984">
    <property type="generic name" value="(1R,2R,3R,4S,5R)-4-(Benzylamino)-5-(methylthio)cyclopentane-1,2,3-triol"/>
</dbReference>
<dbReference type="DrugBank" id="DB08321">
    <property type="generic name" value="(1S,2S,3R,6R)-4-(hydroxymethyl)-6-(octylamino)cyclohex-4-ene-1,2,3-triol"/>
</dbReference>
<dbReference type="DrugBank" id="DB03955">
    <property type="generic name" value="1-deoxymannojirimycin"/>
</dbReference>
<dbReference type="DrugBank" id="DB02318">
    <property type="generic name" value="2-deoxy-2-fluoro-alpha-D-mannosyl fluoride"/>
</dbReference>
<dbReference type="DrugBank" id="DB03008">
    <property type="generic name" value="5-fluoro-beta-L-gulosyl fluoride"/>
</dbReference>
<dbReference type="DrugBank" id="DB03414">
    <property type="generic name" value="5-Thio-a/B-D-Mannopyranosylamine"/>
</dbReference>
<dbReference type="DrugBank" id="DB02492">
    <property type="generic name" value="Ghavamiol"/>
</dbReference>
<dbReference type="DrugBank" id="DB02742">
    <property type="generic name" value="Kifunensine"/>
</dbReference>
<dbReference type="DrugBank" id="DB02034">
    <property type="generic name" value="Tridolgosir"/>
</dbReference>
<dbReference type="CAZy" id="GH38">
    <property type="family name" value="Glycoside Hydrolase Family 38"/>
</dbReference>
<dbReference type="GlyConnect" id="1917">
    <property type="glycosylation" value="9 N-Linked glycans (1 site)"/>
</dbReference>
<dbReference type="GlyCosmos" id="Q16706">
    <property type="glycosylation" value="3 sites, 9 glycans"/>
</dbReference>
<dbReference type="GlyGen" id="Q16706">
    <property type="glycosylation" value="8 sites, 13 N-linked glycans (1 site), 2 O-linked glycans (5 sites)"/>
</dbReference>
<dbReference type="iPTMnet" id="Q16706"/>
<dbReference type="PhosphoSitePlus" id="Q16706"/>
<dbReference type="SwissPalm" id="Q16706"/>
<dbReference type="BioMuta" id="MAN2A1"/>
<dbReference type="DMDM" id="146345453"/>
<dbReference type="jPOST" id="Q16706"/>
<dbReference type="MassIVE" id="Q16706"/>
<dbReference type="PaxDb" id="9606-ENSP00000261483"/>
<dbReference type="PeptideAtlas" id="Q16706"/>
<dbReference type="ProteomicsDB" id="61038"/>
<dbReference type="Pumba" id="Q16706"/>
<dbReference type="Antibodypedia" id="13482">
    <property type="antibodies" value="179 antibodies from 29 providers"/>
</dbReference>
<dbReference type="DNASU" id="4124"/>
<dbReference type="Ensembl" id="ENST00000261483.5">
    <property type="protein sequence ID" value="ENSP00000261483.4"/>
    <property type="gene ID" value="ENSG00000112893.10"/>
</dbReference>
<dbReference type="GeneID" id="4124"/>
<dbReference type="KEGG" id="hsa:4124"/>
<dbReference type="MANE-Select" id="ENST00000261483.5">
    <property type="protein sequence ID" value="ENSP00000261483.4"/>
    <property type="RefSeq nucleotide sequence ID" value="NM_002372.4"/>
    <property type="RefSeq protein sequence ID" value="NP_002363.2"/>
</dbReference>
<dbReference type="UCSC" id="uc003kou.3">
    <property type="organism name" value="human"/>
</dbReference>
<dbReference type="AGR" id="HGNC:6824"/>
<dbReference type="CTD" id="4124"/>
<dbReference type="DisGeNET" id="4124"/>
<dbReference type="GeneCards" id="MAN2A1"/>
<dbReference type="HGNC" id="HGNC:6824">
    <property type="gene designation" value="MAN2A1"/>
</dbReference>
<dbReference type="HPA" id="ENSG00000112893">
    <property type="expression patterns" value="Low tissue specificity"/>
</dbReference>
<dbReference type="MIM" id="154582">
    <property type="type" value="gene"/>
</dbReference>
<dbReference type="neXtProt" id="NX_Q16706"/>
<dbReference type="OpenTargets" id="ENSG00000112893"/>
<dbReference type="PharmGKB" id="PA30573"/>
<dbReference type="VEuPathDB" id="HostDB:ENSG00000112893"/>
<dbReference type="eggNOG" id="KOG1958">
    <property type="taxonomic scope" value="Eukaryota"/>
</dbReference>
<dbReference type="GeneTree" id="ENSGT01030000234638"/>
<dbReference type="HOGENOM" id="CLU_004690_1_0_1"/>
<dbReference type="InParanoid" id="Q16706"/>
<dbReference type="OMA" id="NTDILCH"/>
<dbReference type="OrthoDB" id="10261055at2759"/>
<dbReference type="PAN-GO" id="Q16706">
    <property type="GO annotations" value="4 GO annotations based on evolutionary models"/>
</dbReference>
<dbReference type="PhylomeDB" id="Q16706"/>
<dbReference type="TreeFam" id="TF313152"/>
<dbReference type="BioCyc" id="MetaCyc:HS03629-MONOMER"/>
<dbReference type="PathwayCommons" id="Q16706"/>
<dbReference type="Reactome" id="R-HSA-6811438">
    <property type="pathway name" value="Intra-Golgi traffic"/>
</dbReference>
<dbReference type="Reactome" id="R-HSA-9694548">
    <property type="pathway name" value="Maturation of spike protein"/>
</dbReference>
<dbReference type="Reactome" id="R-HSA-975578">
    <property type="pathway name" value="Reactions specific to the complex N-glycan synthesis pathway"/>
</dbReference>
<dbReference type="SignaLink" id="Q16706"/>
<dbReference type="UniPathway" id="UPA00378"/>
<dbReference type="BioGRID-ORCS" id="4124">
    <property type="hits" value="11 hits in 1163 CRISPR screens"/>
</dbReference>
<dbReference type="ChiTaRS" id="MAN2A1">
    <property type="organism name" value="human"/>
</dbReference>
<dbReference type="GeneWiki" id="MAN2A1"/>
<dbReference type="GenomeRNAi" id="4124"/>
<dbReference type="Pharos" id="Q16706">
    <property type="development level" value="Tbio"/>
</dbReference>
<dbReference type="PRO" id="PR:Q16706"/>
<dbReference type="Proteomes" id="UP000005640">
    <property type="component" value="Chromosome 5"/>
</dbReference>
<dbReference type="RNAct" id="Q16706">
    <property type="molecule type" value="protein"/>
</dbReference>
<dbReference type="Bgee" id="ENSG00000112893">
    <property type="expression patterns" value="Expressed in corpus callosum and 207 other cell types or tissues"/>
</dbReference>
<dbReference type="GO" id="GO:0005801">
    <property type="term" value="C:cis-Golgi network"/>
    <property type="evidence" value="ECO:0007669"/>
    <property type="project" value="Ensembl"/>
</dbReference>
<dbReference type="GO" id="GO:0070062">
    <property type="term" value="C:extracellular exosome"/>
    <property type="evidence" value="ECO:0007005"/>
    <property type="project" value="UniProtKB"/>
</dbReference>
<dbReference type="GO" id="GO:0005797">
    <property type="term" value="C:Golgi medial cisterna"/>
    <property type="evidence" value="ECO:0000314"/>
    <property type="project" value="UniProtKB"/>
</dbReference>
<dbReference type="GO" id="GO:0000139">
    <property type="term" value="C:Golgi membrane"/>
    <property type="evidence" value="ECO:0000318"/>
    <property type="project" value="GO_Central"/>
</dbReference>
<dbReference type="GO" id="GO:0016020">
    <property type="term" value="C:membrane"/>
    <property type="evidence" value="ECO:0007005"/>
    <property type="project" value="UniProtKB"/>
</dbReference>
<dbReference type="GO" id="GO:0004559">
    <property type="term" value="F:alpha-mannosidase activity"/>
    <property type="evidence" value="ECO:0000318"/>
    <property type="project" value="GO_Central"/>
</dbReference>
<dbReference type="GO" id="GO:0030246">
    <property type="term" value="F:carbohydrate binding"/>
    <property type="evidence" value="ECO:0007669"/>
    <property type="project" value="InterPro"/>
</dbReference>
<dbReference type="GO" id="GO:0016799">
    <property type="term" value="F:hydrolase activity, hydrolyzing N-glycosyl compounds"/>
    <property type="evidence" value="ECO:0007669"/>
    <property type="project" value="Ensembl"/>
</dbReference>
<dbReference type="GO" id="GO:0004572">
    <property type="term" value="F:mannosyl-oligosaccharide 1,3-1,6-alpha-mannosidase activity"/>
    <property type="evidence" value="ECO:0000304"/>
    <property type="project" value="ProtInc"/>
</dbReference>
<dbReference type="GO" id="GO:0046872">
    <property type="term" value="F:metal ion binding"/>
    <property type="evidence" value="ECO:0007669"/>
    <property type="project" value="UniProtKB-KW"/>
</dbReference>
<dbReference type="GO" id="GO:0001701">
    <property type="term" value="P:in utero embryonic development"/>
    <property type="evidence" value="ECO:0007669"/>
    <property type="project" value="Ensembl"/>
</dbReference>
<dbReference type="GO" id="GO:0001889">
    <property type="term" value="P:liver development"/>
    <property type="evidence" value="ECO:0007669"/>
    <property type="project" value="Ensembl"/>
</dbReference>
<dbReference type="GO" id="GO:0048286">
    <property type="term" value="P:lung alveolus development"/>
    <property type="evidence" value="ECO:0007669"/>
    <property type="project" value="Ensembl"/>
</dbReference>
<dbReference type="GO" id="GO:0006013">
    <property type="term" value="P:mannose metabolic process"/>
    <property type="evidence" value="ECO:0007669"/>
    <property type="project" value="InterPro"/>
</dbReference>
<dbReference type="GO" id="GO:0007005">
    <property type="term" value="P:mitochondrion organization"/>
    <property type="evidence" value="ECO:0007669"/>
    <property type="project" value="Ensembl"/>
</dbReference>
<dbReference type="GO" id="GO:0006491">
    <property type="term" value="P:N-glycan processing"/>
    <property type="evidence" value="ECO:0000318"/>
    <property type="project" value="GO_Central"/>
</dbReference>
<dbReference type="GO" id="GO:0050769">
    <property type="term" value="P:positive regulation of neurogenesis"/>
    <property type="evidence" value="ECO:0007669"/>
    <property type="project" value="Ensembl"/>
</dbReference>
<dbReference type="GO" id="GO:0006486">
    <property type="term" value="P:protein glycosylation"/>
    <property type="evidence" value="ECO:0007669"/>
    <property type="project" value="UniProtKB-UniPathway"/>
</dbReference>
<dbReference type="GO" id="GO:0007585">
    <property type="term" value="P:respiratory gaseous exchange by respiratory system"/>
    <property type="evidence" value="ECO:0007669"/>
    <property type="project" value="Ensembl"/>
</dbReference>
<dbReference type="GO" id="GO:0060042">
    <property type="term" value="P:retina morphogenesis in camera-type eye"/>
    <property type="evidence" value="ECO:0007669"/>
    <property type="project" value="Ensembl"/>
</dbReference>
<dbReference type="GO" id="GO:0007033">
    <property type="term" value="P:vacuole organization"/>
    <property type="evidence" value="ECO:0007669"/>
    <property type="project" value="Ensembl"/>
</dbReference>
<dbReference type="GO" id="GO:0019082">
    <property type="term" value="P:viral protein processing"/>
    <property type="evidence" value="ECO:0000304"/>
    <property type="project" value="Reactome"/>
</dbReference>
<dbReference type="CDD" id="cd11666">
    <property type="entry name" value="GH38N_Man2A1"/>
    <property type="match status" value="1"/>
</dbReference>
<dbReference type="FunFam" id="1.20.1270.50:FF:000001">
    <property type="entry name" value="Alpha-mannosidase"/>
    <property type="match status" value="1"/>
</dbReference>
<dbReference type="FunFam" id="2.60.40.1180:FF:000009">
    <property type="entry name" value="Alpha-mannosidase"/>
    <property type="match status" value="1"/>
</dbReference>
<dbReference type="FunFam" id="2.70.98.30:FF:000002">
    <property type="entry name" value="Alpha-mannosidase"/>
    <property type="match status" value="1"/>
</dbReference>
<dbReference type="FunFam" id="3.20.110.10:FF:000003">
    <property type="entry name" value="Alpha-mannosidase"/>
    <property type="match status" value="1"/>
</dbReference>
<dbReference type="Gene3D" id="3.20.110.10">
    <property type="entry name" value="Glycoside hydrolase 38, N terminal domain"/>
    <property type="match status" value="1"/>
</dbReference>
<dbReference type="Gene3D" id="1.20.1270.50">
    <property type="entry name" value="Glycoside hydrolase family 38, central domain"/>
    <property type="match status" value="1"/>
</dbReference>
<dbReference type="Gene3D" id="2.60.40.1180">
    <property type="entry name" value="Golgi alpha-mannosidase II"/>
    <property type="match status" value="1"/>
</dbReference>
<dbReference type="Gene3D" id="2.70.98.30">
    <property type="entry name" value="Golgi alpha-mannosidase II, domain 4"/>
    <property type="match status" value="1"/>
</dbReference>
<dbReference type="InterPro" id="IPR011013">
    <property type="entry name" value="Gal_mutarotase_sf_dom"/>
</dbReference>
<dbReference type="InterPro" id="IPR011330">
    <property type="entry name" value="Glyco_hydro/deAcase_b/a-brl"/>
</dbReference>
<dbReference type="InterPro" id="IPR011682">
    <property type="entry name" value="Glyco_hydro_38_C"/>
</dbReference>
<dbReference type="InterPro" id="IPR015341">
    <property type="entry name" value="Glyco_hydro_38_cen"/>
</dbReference>
<dbReference type="InterPro" id="IPR037094">
    <property type="entry name" value="Glyco_hydro_38_cen_sf"/>
</dbReference>
<dbReference type="InterPro" id="IPR000602">
    <property type="entry name" value="Glyco_hydro_38_N"/>
</dbReference>
<dbReference type="InterPro" id="IPR027291">
    <property type="entry name" value="Glyco_hydro_38_N_sf"/>
</dbReference>
<dbReference type="InterPro" id="IPR028995">
    <property type="entry name" value="Glyco_hydro_57/38_cen_sf"/>
</dbReference>
<dbReference type="InterPro" id="IPR013780">
    <property type="entry name" value="Glyco_hydro_b"/>
</dbReference>
<dbReference type="InterPro" id="IPR050843">
    <property type="entry name" value="Glycosyl_Hydrlase_38"/>
</dbReference>
<dbReference type="InterPro" id="IPR048534">
    <property type="entry name" value="Man2a1-like_dom"/>
</dbReference>
<dbReference type="PANTHER" id="PTHR11607">
    <property type="entry name" value="ALPHA-MANNOSIDASE"/>
    <property type="match status" value="1"/>
</dbReference>
<dbReference type="PANTHER" id="PTHR11607:SF69">
    <property type="entry name" value="ALPHA-MANNOSIDASE 2"/>
    <property type="match status" value="1"/>
</dbReference>
<dbReference type="Pfam" id="PF09261">
    <property type="entry name" value="Alpha-mann_mid"/>
    <property type="match status" value="1"/>
</dbReference>
<dbReference type="Pfam" id="PF07748">
    <property type="entry name" value="Glyco_hydro_38C"/>
    <property type="match status" value="1"/>
</dbReference>
<dbReference type="Pfam" id="PF01074">
    <property type="entry name" value="Glyco_hydro_38N"/>
    <property type="match status" value="1"/>
</dbReference>
<dbReference type="Pfam" id="PF21260">
    <property type="entry name" value="Laman-like_dom"/>
    <property type="match status" value="1"/>
</dbReference>
<dbReference type="SMART" id="SM00872">
    <property type="entry name" value="Alpha-mann_mid"/>
    <property type="match status" value="1"/>
</dbReference>
<dbReference type="SUPFAM" id="SSF88688">
    <property type="entry name" value="Families 57/38 glycoside transferase middle domain"/>
    <property type="match status" value="1"/>
</dbReference>
<dbReference type="SUPFAM" id="SSF74650">
    <property type="entry name" value="Galactose mutarotase-like"/>
    <property type="match status" value="1"/>
</dbReference>
<dbReference type="SUPFAM" id="SSF88713">
    <property type="entry name" value="Glycoside hydrolase/deacetylase"/>
    <property type="match status" value="1"/>
</dbReference>
<proteinExistence type="evidence at protein level"/>
<reference key="1">
    <citation type="journal article" date="1995" name="Proc. Natl. Acad. Sci. U.S.A.">
        <title>Molecular cloning and expression of cDNAs encoding human alpha-mannosidase II and a previously unrecognized alpha-mannosidase IIx isozyme.</title>
        <authorList>
            <person name="Misago M."/>
            <person name="Liao Y.-F."/>
            <person name="Kudo S."/>
            <person name="Eto S."/>
            <person name="Mattei M.-G."/>
            <person name="Moremen K.W."/>
            <person name="Fukuda M.N."/>
        </authorList>
    </citation>
    <scope>NUCLEOTIDE SEQUENCE [MRNA]</scope>
    <source>
        <tissue>Liver</tissue>
    </source>
</reference>
<reference key="2">
    <citation type="submission" date="1995-09" db="EMBL/GenBank/DDBJ databases">
        <title>Molecular cloning and sequence analysis of human Golgi mannosidase II.</title>
        <authorList>
            <person name="Misumi Y."/>
            <person name="Hashimoto C."/>
            <person name="Sohoda M."/>
            <person name="Ogata S."/>
            <person name="Ikehara Y."/>
        </authorList>
    </citation>
    <scope>NUCLEOTIDE SEQUENCE [MRNA]</scope>
    <source>
        <tissue>Liver</tissue>
    </source>
</reference>
<reference key="3">
    <citation type="journal article" date="2005" name="J. Proteome Res.">
        <title>Human plasma N-glycoproteome analysis by immunoaffinity subtraction, hydrazide chemistry, and mass spectrometry.</title>
        <authorList>
            <person name="Liu T."/>
            <person name="Qian W.-J."/>
            <person name="Gritsenko M.A."/>
            <person name="Camp D.G. II"/>
            <person name="Monroe M.E."/>
            <person name="Moore R.J."/>
            <person name="Smith R.D."/>
        </authorList>
    </citation>
    <scope>GLYCOSYLATION [LARGE SCALE ANALYSIS] AT ASN-78 AND ASN-1125</scope>
    <source>
        <tissue>Plasma</tissue>
    </source>
</reference>
<reference key="4">
    <citation type="journal article" date="2011" name="BMC Syst. Biol.">
        <title>Initial characterization of the human central proteome.</title>
        <authorList>
            <person name="Burkard T.R."/>
            <person name="Planyavsky M."/>
            <person name="Kaupe I."/>
            <person name="Breitwieser F.P."/>
            <person name="Buerckstuemmer T."/>
            <person name="Bennett K.L."/>
            <person name="Superti-Furga G."/>
            <person name="Colinge J."/>
        </authorList>
    </citation>
    <scope>IDENTIFICATION BY MASS SPECTROMETRY [LARGE SCALE ANALYSIS]</scope>
</reference>
<reference key="5">
    <citation type="journal article" date="2014" name="J. Proteomics">
        <title>An enzyme assisted RP-RPLC approach for in-depth analysis of human liver phosphoproteome.</title>
        <authorList>
            <person name="Bian Y."/>
            <person name="Song C."/>
            <person name="Cheng K."/>
            <person name="Dong M."/>
            <person name="Wang F."/>
            <person name="Huang J."/>
            <person name="Sun D."/>
            <person name="Wang L."/>
            <person name="Ye M."/>
            <person name="Zou H."/>
        </authorList>
    </citation>
    <scope>PHOSPHORYLATION [LARGE SCALE ANALYSIS] AT SER-80 AND SER-82</scope>
    <scope>IDENTIFICATION BY MASS SPECTROMETRY [LARGE SCALE ANALYSIS]</scope>
    <source>
        <tissue>Liver</tissue>
    </source>
</reference>
<reference key="6">
    <citation type="journal article" date="2015" name="Proteomics">
        <title>N-terminome analysis of the human mitochondrial proteome.</title>
        <authorList>
            <person name="Vaca Jacome A.S."/>
            <person name="Rabilloud T."/>
            <person name="Schaeffer-Reiss C."/>
            <person name="Rompais M."/>
            <person name="Ayoub D."/>
            <person name="Lane L."/>
            <person name="Bairoch A."/>
            <person name="Van Dorsselaer A."/>
            <person name="Carapito C."/>
        </authorList>
    </citation>
    <scope>IDENTIFICATION BY MASS SPECTROMETRY [LARGE SCALE ANALYSIS]</scope>
</reference>
<reference key="7">
    <citation type="journal article" date="2015" name="Proc. Natl. Acad. Sci. U.S.A.">
        <title>Neomorphic effects of recurrent somatic mutations in Yin Yang 1 in insulin-producing adenomas.</title>
        <authorList>
            <person name="Cromer M.K."/>
            <person name="Choi M."/>
            <person name="Nelson-Williams C."/>
            <person name="Fonseca A.L."/>
            <person name="Kunstman J.W."/>
            <person name="Korah R.M."/>
            <person name="Overton J.D."/>
            <person name="Mane S."/>
            <person name="Kenney B."/>
            <person name="Malchoff C.D."/>
            <person name="Stalberg P."/>
            <person name="Akerstroem G."/>
            <person name="Westin G."/>
            <person name="Hellman P."/>
            <person name="Carling T."/>
            <person name="Bjoerklund P."/>
            <person name="Lifton R.P."/>
        </authorList>
    </citation>
    <scope>VARIANT VAL-1012</scope>
</reference>
<organism>
    <name type="scientific">Homo sapiens</name>
    <name type="common">Human</name>
    <dbReference type="NCBI Taxonomy" id="9606"/>
    <lineage>
        <taxon>Eukaryota</taxon>
        <taxon>Metazoa</taxon>
        <taxon>Chordata</taxon>
        <taxon>Craniata</taxon>
        <taxon>Vertebrata</taxon>
        <taxon>Euteleostomi</taxon>
        <taxon>Mammalia</taxon>
        <taxon>Eutheria</taxon>
        <taxon>Euarchontoglires</taxon>
        <taxon>Primates</taxon>
        <taxon>Haplorrhini</taxon>
        <taxon>Catarrhini</taxon>
        <taxon>Hominidae</taxon>
        <taxon>Homo</taxon>
    </lineage>
</organism>
<sequence>MKLSRQFTVFGSAIFCVVIFSLYLMLDRGHLDYPRNPRREGSFPQGQLSMLQEKIDHLERLLAENNEIISNIRDSVINLSESVEDGPKSSQSNFSQGAGSHLLPSQLSLSVDTADCLFASQSGSHNSDVQMLDVYSLISFDNPDGGVWKQGFDITYESNEWDTEPLQVFVVPHSHNDPGWLKTFNDYFRDKTQYIFNNMVLKLKEDSRRKFIWSEISYLSKWWDIIDIQKKDAVKSLIENGQLEIVTGGWVMPDEATPHYFALIDQLIEGHQWLENNIGVKPRSGWAIDPFGHSPTMAYLLNRAGLSHMLIQRVHYAVKKHFALHKTLEFFWRQNWDLGSVTDILCHMMPFYSYDIPHTCGPDPKICCQFDFKRLPGGRFGCPWGVPPETIHPGNVQSRARMLLDQYRKKSKLFRTKVLLAPLGDDFRYCEYTEWDLQFKNYQQLFDYMNSQSKFKVKIQFGTLSDFFDALDKADETQRDKGQSMFPVLSGDFFTYADRDDHYWSGYFTSRPFYKRMDRIMESHLRAAEILYYFALRQAHKYKINKFLSSSLYTALTEARRNLGLFQHHDAITGTAKDWVVVDYGTRLFHSLMVLEKIIGNSAFLLILKDKLTYDSYSPDTFLEMDLKQKSQDSLPQKNIIRLSAEPRYLVVYNPLEQDRISLVSVYVSSPTVQVFSASGKPVEVQVSAVWDTANTISETAYEISFRAHIPPLGLKVYKILESASSNSHLADYVLYKNKVEDSGIFTIKNMINTEEGITLENSFVLLRFDQTGLMKQMMTKEDGKHHEVNVQFSWYGTTIKRDKSGAYLFLPDGNAKPYVYTTPPFVRVTHGRIYSEVTCFFDHVTHRVRLYHIQGIEGQSVEVSNIVDIRKVYNREIAMKISSDIKSQNRFYTDLNGYQIQPRMTLSKLPLQANVYPMTTMAYIQDAKHRLTLLSAQSLGVSSLNSGQIEVIMDRRLMQDDNRGLEQGIQDNKITANLFRILLEKRSAVNTEEEKKSVSYPSLLSHITSSLMNHPVIPMANKFSSPTLELQGEFSPLQSSLPCDIHLVNLRTIQSKVGNGHSNEAALILHRKGFDCRFSSKGTGLFCSTTQGKILVQKLLNKFIVESLTPSSLSLMHSPPGTQNISEINLSPMEISTFRIQLR</sequence>
<protein>
    <recommendedName>
        <fullName>Alpha-mannosidase 2</fullName>
        <ecNumber evidence="2">3.2.1.114</ecNumber>
    </recommendedName>
    <alternativeName>
        <fullName>Golgi alpha-mannosidase II</fullName>
        <shortName>AMan II</shortName>
        <shortName>Man II</shortName>
    </alternativeName>
    <alternativeName>
        <fullName>Mannosidase alpha class 2A member 1</fullName>
    </alternativeName>
    <alternativeName>
        <fullName>Mannosyl-oligosaccharide 1,3-1,6-alpha-mannosidase</fullName>
    </alternativeName>
</protein>
<name>MA2A1_HUMAN</name>
<keyword id="KW-1015">Disulfide bond</keyword>
<keyword id="KW-0325">Glycoprotein</keyword>
<keyword id="KW-0326">Glycosidase</keyword>
<keyword id="KW-0333">Golgi apparatus</keyword>
<keyword id="KW-0378">Hydrolase</keyword>
<keyword id="KW-0472">Membrane</keyword>
<keyword id="KW-0479">Metal-binding</keyword>
<keyword id="KW-0597">Phosphoprotein</keyword>
<keyword id="KW-1267">Proteomics identification</keyword>
<keyword id="KW-1185">Reference proteome</keyword>
<keyword id="KW-0735">Signal-anchor</keyword>
<keyword id="KW-0812">Transmembrane</keyword>
<keyword id="KW-1133">Transmembrane helix</keyword>
<keyword id="KW-0862">Zinc</keyword>
<comment type="function">
    <text evidence="2">Catalyzes the first committed step in the biosynthesis of complex N-glycans. It controls conversion of high mannose to complex N-glycans; the final hydrolytic step in the N-glycan maturation pathway.</text>
</comment>
<comment type="catalytic activity">
    <reaction evidence="2">
        <text>N(4)-{beta-D-GlcNAc-(1-&gt;2)-alpha-D-Man-(1-&gt;3)-[alpha-D-Man-(1-&gt;3)-[alpha-D-Man-(1-&gt;6)]-alpha-D-Man-(1-&gt;6)]-beta-D-Man-(1-&gt;4)-beta-D-GlcNAc-(1-&gt;4)-beta-D-GlcNAc}-L-asparaginyl-[protein] + 2 H2O = 2 alpha-D-mannopyranose + an N(4)-{beta-D-GlcNAc-(1-&gt;2)-alpha-D-Man-(1-&gt;3)-[alpha-D-Man-(1-&gt;6)]-beta-D-Man-(1-&gt;4)-beta-D-GlcNAc-(1-&gt;4)-beta-D-GlcNAc}-L-asparaginyl-[protein]</text>
        <dbReference type="Rhea" id="RHEA:56052"/>
        <dbReference type="Rhea" id="RHEA-COMP:14368"/>
        <dbReference type="Rhea" id="RHEA-COMP:14369"/>
        <dbReference type="ChEBI" id="CHEBI:15377"/>
        <dbReference type="ChEBI" id="CHEBI:28729"/>
        <dbReference type="ChEBI" id="CHEBI:60615"/>
        <dbReference type="ChEBI" id="CHEBI:60625"/>
        <dbReference type="EC" id="3.2.1.114"/>
    </reaction>
</comment>
<comment type="cofactor">
    <cofactor evidence="3">
        <name>Zn(2+)</name>
        <dbReference type="ChEBI" id="CHEBI:29105"/>
    </cofactor>
    <text evidence="3">Binds 1 zinc ion per subunit.</text>
</comment>
<comment type="pathway">
    <text>Protein modification; protein glycosylation.</text>
</comment>
<comment type="subunit">
    <text evidence="2">Homodimer; disulfide-linked.</text>
</comment>
<comment type="subcellular location">
    <subcellularLocation>
        <location evidence="2">Golgi apparatus membrane</location>
        <topology evidence="2">Single-pass type II membrane protein</topology>
    </subcellularLocation>
</comment>
<comment type="PTM">
    <text evidence="5">Glycosylated.</text>
</comment>
<comment type="similarity">
    <text evidence="7">Belongs to the glycosyl hydrolase 38 family.</text>
</comment>
<gene>
    <name type="primary">MAN2A1</name>
    <name type="synonym">MANA2</name>
</gene>
<evidence type="ECO:0000250" key="1"/>
<evidence type="ECO:0000250" key="2">
    <source>
        <dbReference type="UniProtKB" id="P28494"/>
    </source>
</evidence>
<evidence type="ECO:0000250" key="3">
    <source>
        <dbReference type="UniProtKB" id="Q29451"/>
    </source>
</evidence>
<evidence type="ECO:0000255" key="4"/>
<evidence type="ECO:0000269" key="5">
    <source>
    </source>
</evidence>
<evidence type="ECO:0000269" key="6">
    <source>
    </source>
</evidence>
<evidence type="ECO:0000305" key="7"/>
<evidence type="ECO:0007744" key="8">
    <source>
    </source>
</evidence>
<feature type="chain" id="PRO_0000206902" description="Alpha-mannosidase 2">
    <location>
        <begin position="1"/>
        <end position="1144"/>
    </location>
</feature>
<feature type="topological domain" description="Cytoplasmic" evidence="4">
    <location>
        <begin position="1"/>
        <end position="5"/>
    </location>
</feature>
<feature type="transmembrane region" description="Helical; Signal-anchor for type II membrane protein" evidence="4">
    <location>
        <begin position="6"/>
        <end position="26"/>
    </location>
</feature>
<feature type="topological domain" description="Lumenal" evidence="4">
    <location>
        <begin position="27"/>
        <end position="1144"/>
    </location>
</feature>
<feature type="active site" description="Nucleophile" evidence="1">
    <location>
        <position position="289"/>
    </location>
</feature>
<feature type="binding site" evidence="1">
    <location>
        <position position="175"/>
    </location>
    <ligand>
        <name>Zn(2+)</name>
        <dbReference type="ChEBI" id="CHEBI:29105"/>
    </ligand>
</feature>
<feature type="binding site" evidence="1">
    <location>
        <position position="177"/>
    </location>
    <ligand>
        <name>Zn(2+)</name>
        <dbReference type="ChEBI" id="CHEBI:29105"/>
    </ligand>
</feature>
<feature type="binding site" evidence="1">
    <location>
        <position position="289"/>
    </location>
    <ligand>
        <name>Zn(2+)</name>
        <dbReference type="ChEBI" id="CHEBI:29105"/>
    </ligand>
</feature>
<feature type="binding site" evidence="1">
    <location>
        <position position="569"/>
    </location>
    <ligand>
        <name>Zn(2+)</name>
        <dbReference type="ChEBI" id="CHEBI:29105"/>
    </ligand>
</feature>
<feature type="modified residue" description="Phosphoserine" evidence="8">
    <location>
        <position position="80"/>
    </location>
</feature>
<feature type="modified residue" description="Phosphoserine" evidence="8">
    <location>
        <position position="82"/>
    </location>
</feature>
<feature type="glycosylation site" description="N-linked (GlcNAc...) asparagine" evidence="5">
    <location>
        <position position="78"/>
    </location>
</feature>
<feature type="glycosylation site" description="N-linked (GlcNAc...) asparagine" evidence="4">
    <location>
        <position position="93"/>
    </location>
</feature>
<feature type="glycosylation site" description="N-linked (GlcNAc...) asparagine" evidence="5">
    <location>
        <position position="1125"/>
    </location>
</feature>
<feature type="sequence variant" id="VAR_074182" evidence="6">
    <original>L</original>
    <variation>V</variation>
    <location>
        <position position="1012"/>
    </location>
</feature>
<feature type="sequence conflict" description="In Ref. 1; AAC50302." evidence="7" ref="1">
    <original>L</original>
    <variation>G</variation>
    <location>
        <position position="608"/>
    </location>
</feature>
<feature type="sequence conflict" description="In Ref. 2; BAA10017." evidence="7" ref="2">
    <location>
        <position position="1026"/>
    </location>
</feature>